<protein>
    <recommendedName>
        <fullName evidence="1">Polyribonucleotide nucleotidyltransferase</fullName>
        <ecNumber evidence="1">2.7.7.8</ecNumber>
    </recommendedName>
    <alternativeName>
        <fullName evidence="1">Polynucleotide phosphorylase</fullName>
        <shortName evidence="1">PNPase</shortName>
    </alternativeName>
</protein>
<comment type="function">
    <text evidence="1">Involved in mRNA degradation. Catalyzes the phosphorolysis of single-stranded polyribonucleotides processively in the 3'- to 5'-direction.</text>
</comment>
<comment type="catalytic activity">
    <reaction evidence="1">
        <text>RNA(n+1) + phosphate = RNA(n) + a ribonucleoside 5'-diphosphate</text>
        <dbReference type="Rhea" id="RHEA:22096"/>
        <dbReference type="Rhea" id="RHEA-COMP:14527"/>
        <dbReference type="Rhea" id="RHEA-COMP:17342"/>
        <dbReference type="ChEBI" id="CHEBI:43474"/>
        <dbReference type="ChEBI" id="CHEBI:57930"/>
        <dbReference type="ChEBI" id="CHEBI:140395"/>
        <dbReference type="EC" id="2.7.7.8"/>
    </reaction>
</comment>
<comment type="cofactor">
    <cofactor evidence="1">
        <name>Mg(2+)</name>
        <dbReference type="ChEBI" id="CHEBI:18420"/>
    </cofactor>
</comment>
<comment type="subunit">
    <text evidence="1">Component of the RNA degradosome, which is a multiprotein complex involved in RNA processing and mRNA degradation.</text>
</comment>
<comment type="subcellular location">
    <subcellularLocation>
        <location evidence="1">Cytoplasm</location>
    </subcellularLocation>
</comment>
<comment type="similarity">
    <text evidence="1">Belongs to the polyribonucleotide nucleotidyltransferase family.</text>
</comment>
<gene>
    <name evidence="1" type="primary">pnp</name>
    <name type="ordered locus">STY3463</name>
    <name type="ordered locus">t3200</name>
</gene>
<proteinExistence type="inferred from homology"/>
<dbReference type="EC" id="2.7.7.8" evidence="1"/>
<dbReference type="EMBL" id="AE014613">
    <property type="protein sequence ID" value="AAO70738.1"/>
    <property type="molecule type" value="Genomic_DNA"/>
</dbReference>
<dbReference type="EMBL" id="AL513382">
    <property type="protein sequence ID" value="CAD07802.1"/>
    <property type="molecule type" value="Genomic_DNA"/>
</dbReference>
<dbReference type="RefSeq" id="NP_457664.1">
    <property type="nucleotide sequence ID" value="NC_003198.1"/>
</dbReference>
<dbReference type="RefSeq" id="WP_010989243.1">
    <property type="nucleotide sequence ID" value="NZ_WSUR01000003.1"/>
</dbReference>
<dbReference type="SMR" id="Q8Z3I0"/>
<dbReference type="STRING" id="220341.gene:17587313"/>
<dbReference type="KEGG" id="stt:t3200"/>
<dbReference type="KEGG" id="sty:STY3463"/>
<dbReference type="PATRIC" id="fig|220341.7.peg.3525"/>
<dbReference type="eggNOG" id="COG1185">
    <property type="taxonomic scope" value="Bacteria"/>
</dbReference>
<dbReference type="HOGENOM" id="CLU_004217_2_2_6"/>
<dbReference type="OMA" id="RFMFHYN"/>
<dbReference type="OrthoDB" id="9804305at2"/>
<dbReference type="Proteomes" id="UP000000541">
    <property type="component" value="Chromosome"/>
</dbReference>
<dbReference type="Proteomes" id="UP000002670">
    <property type="component" value="Chromosome"/>
</dbReference>
<dbReference type="GO" id="GO:0005829">
    <property type="term" value="C:cytosol"/>
    <property type="evidence" value="ECO:0007669"/>
    <property type="project" value="TreeGrafter"/>
</dbReference>
<dbReference type="GO" id="GO:0000175">
    <property type="term" value="F:3'-5'-RNA exonuclease activity"/>
    <property type="evidence" value="ECO:0007669"/>
    <property type="project" value="TreeGrafter"/>
</dbReference>
<dbReference type="GO" id="GO:0000287">
    <property type="term" value="F:magnesium ion binding"/>
    <property type="evidence" value="ECO:0007669"/>
    <property type="project" value="UniProtKB-UniRule"/>
</dbReference>
<dbReference type="GO" id="GO:0004654">
    <property type="term" value="F:polyribonucleotide nucleotidyltransferase activity"/>
    <property type="evidence" value="ECO:0007669"/>
    <property type="project" value="UniProtKB-UniRule"/>
</dbReference>
<dbReference type="GO" id="GO:0003723">
    <property type="term" value="F:RNA binding"/>
    <property type="evidence" value="ECO:0007669"/>
    <property type="project" value="UniProtKB-UniRule"/>
</dbReference>
<dbReference type="GO" id="GO:0006402">
    <property type="term" value="P:mRNA catabolic process"/>
    <property type="evidence" value="ECO:0007669"/>
    <property type="project" value="UniProtKB-UniRule"/>
</dbReference>
<dbReference type="GO" id="GO:0006396">
    <property type="term" value="P:RNA processing"/>
    <property type="evidence" value="ECO:0007669"/>
    <property type="project" value="InterPro"/>
</dbReference>
<dbReference type="CDD" id="cd02393">
    <property type="entry name" value="KH-I_PNPase"/>
    <property type="match status" value="1"/>
</dbReference>
<dbReference type="CDD" id="cd11363">
    <property type="entry name" value="RNase_PH_PNPase_1"/>
    <property type="match status" value="1"/>
</dbReference>
<dbReference type="CDD" id="cd11364">
    <property type="entry name" value="RNase_PH_PNPase_2"/>
    <property type="match status" value="1"/>
</dbReference>
<dbReference type="CDD" id="cd04472">
    <property type="entry name" value="S1_PNPase"/>
    <property type="match status" value="1"/>
</dbReference>
<dbReference type="FunFam" id="2.40.50.140:FF:000023">
    <property type="entry name" value="Polyribonucleotide nucleotidyltransferase"/>
    <property type="match status" value="1"/>
</dbReference>
<dbReference type="FunFam" id="3.30.1370.10:FF:000001">
    <property type="entry name" value="Polyribonucleotide nucleotidyltransferase"/>
    <property type="match status" value="1"/>
</dbReference>
<dbReference type="FunFam" id="3.30.230.70:FF:000001">
    <property type="entry name" value="Polyribonucleotide nucleotidyltransferase"/>
    <property type="match status" value="1"/>
</dbReference>
<dbReference type="FunFam" id="3.30.230.70:FF:000002">
    <property type="entry name" value="Polyribonucleotide nucleotidyltransferase"/>
    <property type="match status" value="1"/>
</dbReference>
<dbReference type="Gene3D" id="3.30.230.70">
    <property type="entry name" value="GHMP Kinase, N-terminal domain"/>
    <property type="match status" value="2"/>
</dbReference>
<dbReference type="Gene3D" id="3.30.1370.10">
    <property type="entry name" value="K Homology domain, type 1"/>
    <property type="match status" value="1"/>
</dbReference>
<dbReference type="Gene3D" id="2.40.50.140">
    <property type="entry name" value="Nucleic acid-binding proteins"/>
    <property type="match status" value="1"/>
</dbReference>
<dbReference type="HAMAP" id="MF_01595">
    <property type="entry name" value="PNPase"/>
    <property type="match status" value="1"/>
</dbReference>
<dbReference type="InterPro" id="IPR001247">
    <property type="entry name" value="ExoRNase_PH_dom1"/>
</dbReference>
<dbReference type="InterPro" id="IPR015847">
    <property type="entry name" value="ExoRNase_PH_dom2"/>
</dbReference>
<dbReference type="InterPro" id="IPR036345">
    <property type="entry name" value="ExoRNase_PH_dom2_sf"/>
</dbReference>
<dbReference type="InterPro" id="IPR004087">
    <property type="entry name" value="KH_dom"/>
</dbReference>
<dbReference type="InterPro" id="IPR004088">
    <property type="entry name" value="KH_dom_type_1"/>
</dbReference>
<dbReference type="InterPro" id="IPR036612">
    <property type="entry name" value="KH_dom_type_1_sf"/>
</dbReference>
<dbReference type="InterPro" id="IPR012340">
    <property type="entry name" value="NA-bd_OB-fold"/>
</dbReference>
<dbReference type="InterPro" id="IPR012162">
    <property type="entry name" value="PNPase"/>
</dbReference>
<dbReference type="InterPro" id="IPR027408">
    <property type="entry name" value="PNPase/RNase_PH_dom_sf"/>
</dbReference>
<dbReference type="InterPro" id="IPR015848">
    <property type="entry name" value="PNPase_PH_RNA-bd_bac/org-type"/>
</dbReference>
<dbReference type="InterPro" id="IPR036456">
    <property type="entry name" value="PNPase_PH_RNA-bd_sf"/>
</dbReference>
<dbReference type="InterPro" id="IPR020568">
    <property type="entry name" value="Ribosomal_Su5_D2-typ_SF"/>
</dbReference>
<dbReference type="InterPro" id="IPR003029">
    <property type="entry name" value="S1_domain"/>
</dbReference>
<dbReference type="NCBIfam" id="TIGR03591">
    <property type="entry name" value="polynuc_phos"/>
    <property type="match status" value="1"/>
</dbReference>
<dbReference type="NCBIfam" id="NF008805">
    <property type="entry name" value="PRK11824.1"/>
    <property type="match status" value="1"/>
</dbReference>
<dbReference type="PANTHER" id="PTHR11252">
    <property type="entry name" value="POLYRIBONUCLEOTIDE NUCLEOTIDYLTRANSFERASE"/>
    <property type="match status" value="1"/>
</dbReference>
<dbReference type="PANTHER" id="PTHR11252:SF0">
    <property type="entry name" value="POLYRIBONUCLEOTIDE NUCLEOTIDYLTRANSFERASE 1, MITOCHONDRIAL"/>
    <property type="match status" value="1"/>
</dbReference>
<dbReference type="Pfam" id="PF00013">
    <property type="entry name" value="KH_1"/>
    <property type="match status" value="1"/>
</dbReference>
<dbReference type="Pfam" id="PF03726">
    <property type="entry name" value="PNPase"/>
    <property type="match status" value="1"/>
</dbReference>
<dbReference type="Pfam" id="PF01138">
    <property type="entry name" value="RNase_PH"/>
    <property type="match status" value="2"/>
</dbReference>
<dbReference type="Pfam" id="PF03725">
    <property type="entry name" value="RNase_PH_C"/>
    <property type="match status" value="2"/>
</dbReference>
<dbReference type="Pfam" id="PF00575">
    <property type="entry name" value="S1"/>
    <property type="match status" value="1"/>
</dbReference>
<dbReference type="PIRSF" id="PIRSF005499">
    <property type="entry name" value="PNPase"/>
    <property type="match status" value="1"/>
</dbReference>
<dbReference type="SMART" id="SM00322">
    <property type="entry name" value="KH"/>
    <property type="match status" value="1"/>
</dbReference>
<dbReference type="SMART" id="SM00316">
    <property type="entry name" value="S1"/>
    <property type="match status" value="1"/>
</dbReference>
<dbReference type="SUPFAM" id="SSF54791">
    <property type="entry name" value="Eukaryotic type KH-domain (KH-domain type I)"/>
    <property type="match status" value="1"/>
</dbReference>
<dbReference type="SUPFAM" id="SSF50249">
    <property type="entry name" value="Nucleic acid-binding proteins"/>
    <property type="match status" value="1"/>
</dbReference>
<dbReference type="SUPFAM" id="SSF46915">
    <property type="entry name" value="Polynucleotide phosphorylase/guanosine pentaphosphate synthase (PNPase/GPSI), domain 3"/>
    <property type="match status" value="1"/>
</dbReference>
<dbReference type="SUPFAM" id="SSF55666">
    <property type="entry name" value="Ribonuclease PH domain 2-like"/>
    <property type="match status" value="2"/>
</dbReference>
<dbReference type="SUPFAM" id="SSF54211">
    <property type="entry name" value="Ribosomal protein S5 domain 2-like"/>
    <property type="match status" value="2"/>
</dbReference>
<dbReference type="PROSITE" id="PS50084">
    <property type="entry name" value="KH_TYPE_1"/>
    <property type="match status" value="1"/>
</dbReference>
<dbReference type="PROSITE" id="PS50126">
    <property type="entry name" value="S1"/>
    <property type="match status" value="1"/>
</dbReference>
<organism>
    <name type="scientific">Salmonella typhi</name>
    <dbReference type="NCBI Taxonomy" id="90370"/>
    <lineage>
        <taxon>Bacteria</taxon>
        <taxon>Pseudomonadati</taxon>
        <taxon>Pseudomonadota</taxon>
        <taxon>Gammaproteobacteria</taxon>
        <taxon>Enterobacterales</taxon>
        <taxon>Enterobacteriaceae</taxon>
        <taxon>Salmonella</taxon>
    </lineage>
</organism>
<evidence type="ECO:0000255" key="1">
    <source>
        <dbReference type="HAMAP-Rule" id="MF_01595"/>
    </source>
</evidence>
<evidence type="ECO:0000256" key="2">
    <source>
        <dbReference type="SAM" id="MobiDB-lite"/>
    </source>
</evidence>
<keyword id="KW-0963">Cytoplasm</keyword>
<keyword id="KW-0460">Magnesium</keyword>
<keyword id="KW-0479">Metal-binding</keyword>
<keyword id="KW-0548">Nucleotidyltransferase</keyword>
<keyword id="KW-0694">RNA-binding</keyword>
<keyword id="KW-0808">Transferase</keyword>
<name>PNP_SALTI</name>
<reference key="1">
    <citation type="journal article" date="2001" name="Nature">
        <title>Complete genome sequence of a multiple drug resistant Salmonella enterica serovar Typhi CT18.</title>
        <authorList>
            <person name="Parkhill J."/>
            <person name="Dougan G."/>
            <person name="James K.D."/>
            <person name="Thomson N.R."/>
            <person name="Pickard D."/>
            <person name="Wain J."/>
            <person name="Churcher C.M."/>
            <person name="Mungall K.L."/>
            <person name="Bentley S.D."/>
            <person name="Holden M.T.G."/>
            <person name="Sebaihia M."/>
            <person name="Baker S."/>
            <person name="Basham D."/>
            <person name="Brooks K."/>
            <person name="Chillingworth T."/>
            <person name="Connerton P."/>
            <person name="Cronin A."/>
            <person name="Davis P."/>
            <person name="Davies R.M."/>
            <person name="Dowd L."/>
            <person name="White N."/>
            <person name="Farrar J."/>
            <person name="Feltwell T."/>
            <person name="Hamlin N."/>
            <person name="Haque A."/>
            <person name="Hien T.T."/>
            <person name="Holroyd S."/>
            <person name="Jagels K."/>
            <person name="Krogh A."/>
            <person name="Larsen T.S."/>
            <person name="Leather S."/>
            <person name="Moule S."/>
            <person name="O'Gaora P."/>
            <person name="Parry C."/>
            <person name="Quail M.A."/>
            <person name="Rutherford K.M."/>
            <person name="Simmonds M."/>
            <person name="Skelton J."/>
            <person name="Stevens K."/>
            <person name="Whitehead S."/>
            <person name="Barrell B.G."/>
        </authorList>
    </citation>
    <scope>NUCLEOTIDE SEQUENCE [LARGE SCALE GENOMIC DNA]</scope>
    <source>
        <strain>CT18</strain>
    </source>
</reference>
<reference key="2">
    <citation type="journal article" date="2003" name="J. Bacteriol.">
        <title>Comparative genomics of Salmonella enterica serovar Typhi strains Ty2 and CT18.</title>
        <authorList>
            <person name="Deng W."/>
            <person name="Liou S.-R."/>
            <person name="Plunkett G. III"/>
            <person name="Mayhew G.F."/>
            <person name="Rose D.J."/>
            <person name="Burland V."/>
            <person name="Kodoyianni V."/>
            <person name="Schwartz D.C."/>
            <person name="Blattner F.R."/>
        </authorList>
    </citation>
    <scope>NUCLEOTIDE SEQUENCE [LARGE SCALE GENOMIC DNA]</scope>
    <source>
        <strain>ATCC 700931 / Ty2</strain>
    </source>
</reference>
<sequence length="711" mass="77070">MLNPIVREFQYGQHTVTLETGMMARQATAAVMVSMDDTAVFVTVVGQKKAKPGQDFFPLTVNYQERTYAAGRIPGSFFRREGRPSEGETLIARLIDRPVRPLFPEGFVNEVQVIATVVSVNPQVNPDIVAMIGASAALSLSGIPFNGPIGAARVGYINDQYVLNPTQDELKESKLDLVVAGTEAAVLMVESEAELLSEDTMLGAVVFGHEQQQVVIQAINDLVKEAGKPRWDWQPEAVNDALNARVAALAESRLSDAYRITDKQERYAQVDVIKSETIEQLIAEDETLDANELGEILHAIEKNVVRSRVLAGEPRIDGREKDMIRGLDVRTGVLPRTHGSALFTRGETQALVTATLGTARDAQVLDELMGERTDSFLFHYNFPPYSVGETGMVGSPKRREIGHGRLAKRGVLAVMPDMDKFPYTVRVVSEITESNGSSSMASVCGASLALMDAGVPIKAAVAGIAMGLVKEGDNYVVLSDILGDEDHLGDMDFKVAGSRDGISALQMDIKIEGITKEIMQVALNQAKGARLHILGVMEQAINAPRGDISEFAPRIHTIKISTDKIKDVIGKGGSVIRALTEETGTTIEIEDDGTVKIAATDGEKAKYAIRRIEEITAEIEVGRIYNSKVTRIVDFGAFVAIGGGKEGLVHISQIADKRVEKVTDYLQMGQEVPVKVLEVDRQGRVRLSIKEATEQSQPAAAPEAPASEQAE</sequence>
<accession>Q8Z3I0</accession>
<accession>Q7C708</accession>
<feature type="chain" id="PRO_0000329833" description="Polyribonucleotide nucleotidyltransferase">
    <location>
        <begin position="1"/>
        <end position="711"/>
    </location>
</feature>
<feature type="domain" description="KH" evidence="1">
    <location>
        <begin position="553"/>
        <end position="612"/>
    </location>
</feature>
<feature type="domain" description="S1 motif" evidence="1">
    <location>
        <begin position="622"/>
        <end position="690"/>
    </location>
</feature>
<feature type="region of interest" description="Disordered" evidence="2">
    <location>
        <begin position="689"/>
        <end position="711"/>
    </location>
</feature>
<feature type="compositionally biased region" description="Low complexity" evidence="2">
    <location>
        <begin position="694"/>
        <end position="711"/>
    </location>
</feature>
<feature type="binding site" evidence="1">
    <location>
        <position position="486"/>
    </location>
    <ligand>
        <name>Mg(2+)</name>
        <dbReference type="ChEBI" id="CHEBI:18420"/>
    </ligand>
</feature>
<feature type="binding site" evidence="1">
    <location>
        <position position="492"/>
    </location>
    <ligand>
        <name>Mg(2+)</name>
        <dbReference type="ChEBI" id="CHEBI:18420"/>
    </ligand>
</feature>